<sequence>MRHGDISSSPDTVGVAVVNYKMPRLHTKNEVLENCRNIAKVIGGVKQGLPGLDLIIFPEYSTHGIMYDRQEMFDTAASVPGEETAILAEACKKNKVWGVFSLTGEKHEQAKKNPYNTLILVNDKGEIVQKYRKILPWCPIECWYPGDKTYVVDGPKGLKVSLIICDDGNYPEIWRDCAMRGAELIVRCQGYMYPAKEQQIAIVKAMAWANQCYVAVANATGFDGVYSYFGHSSIIGFDGHTLGECGEEENGLQYAQLSVQQIRDARKYDQSQNQLFKLLHRGYSGVFASGDGDKGVAECPFEFYKTWVNDPKKAQENVEKFTRPSVGVAACPVGDLPTK</sequence>
<evidence type="ECO:0000255" key="1">
    <source>
        <dbReference type="HAMAP-Rule" id="MF_01242"/>
    </source>
</evidence>
<evidence type="ECO:0000255" key="2">
    <source>
        <dbReference type="PROSITE-ProRule" id="PRU00054"/>
    </source>
</evidence>
<dbReference type="EC" id="3.5.1.4" evidence="1"/>
<dbReference type="EMBL" id="AE001439">
    <property type="protein sequence ID" value="AAD05860.1"/>
    <property type="molecule type" value="Genomic_DNA"/>
</dbReference>
<dbReference type="PIR" id="B71951">
    <property type="entry name" value="B71951"/>
</dbReference>
<dbReference type="RefSeq" id="WP_001215734.1">
    <property type="nucleotide sequence ID" value="NZ_CP011330.1"/>
</dbReference>
<dbReference type="SMR" id="Q9ZME1"/>
<dbReference type="IntAct" id="Q9ZME1">
    <property type="interactions" value="2"/>
</dbReference>
<dbReference type="KEGG" id="hpj:jhp_0279"/>
<dbReference type="PATRIC" id="fig|85963.30.peg.735"/>
<dbReference type="eggNOG" id="COG0388">
    <property type="taxonomic scope" value="Bacteria"/>
</dbReference>
<dbReference type="Proteomes" id="UP000000804">
    <property type="component" value="Chromosome"/>
</dbReference>
<dbReference type="GO" id="GO:0004040">
    <property type="term" value="F:amidase activity"/>
    <property type="evidence" value="ECO:0007669"/>
    <property type="project" value="UniProtKB-UniRule"/>
</dbReference>
<dbReference type="CDD" id="cd07565">
    <property type="entry name" value="aliphatic_amidase"/>
    <property type="match status" value="1"/>
</dbReference>
<dbReference type="FunFam" id="3.60.110.10:FF:000014">
    <property type="entry name" value="Aliphatic amidase"/>
    <property type="match status" value="1"/>
</dbReference>
<dbReference type="Gene3D" id="3.60.110.10">
    <property type="entry name" value="Carbon-nitrogen hydrolase"/>
    <property type="match status" value="1"/>
</dbReference>
<dbReference type="HAMAP" id="MF_01242">
    <property type="entry name" value="Aliphatic_amidase"/>
    <property type="match status" value="1"/>
</dbReference>
<dbReference type="InterPro" id="IPR050345">
    <property type="entry name" value="Aliph_Amidase/BUP"/>
</dbReference>
<dbReference type="InterPro" id="IPR023719">
    <property type="entry name" value="Aliphatic_amidase"/>
</dbReference>
<dbReference type="InterPro" id="IPR003010">
    <property type="entry name" value="C-N_Hydrolase"/>
</dbReference>
<dbReference type="InterPro" id="IPR036526">
    <property type="entry name" value="C-N_Hydrolase_sf"/>
</dbReference>
<dbReference type="NCBIfam" id="NF009802">
    <property type="entry name" value="PRK13286.1"/>
    <property type="match status" value="1"/>
</dbReference>
<dbReference type="PANTHER" id="PTHR43674:SF14">
    <property type="entry name" value="ALIPHATIC AMIDASE"/>
    <property type="match status" value="1"/>
</dbReference>
<dbReference type="PANTHER" id="PTHR43674">
    <property type="entry name" value="NITRILASE C965.09-RELATED"/>
    <property type="match status" value="1"/>
</dbReference>
<dbReference type="Pfam" id="PF00795">
    <property type="entry name" value="CN_hydrolase"/>
    <property type="match status" value="1"/>
</dbReference>
<dbReference type="SUPFAM" id="SSF56317">
    <property type="entry name" value="Carbon-nitrogen hydrolase"/>
    <property type="match status" value="1"/>
</dbReference>
<dbReference type="PROSITE" id="PS50263">
    <property type="entry name" value="CN_HYDROLASE"/>
    <property type="match status" value="1"/>
</dbReference>
<reference key="1">
    <citation type="journal article" date="1999" name="Nature">
        <title>Genomic sequence comparison of two unrelated isolates of the human gastric pathogen Helicobacter pylori.</title>
        <authorList>
            <person name="Alm R.A."/>
            <person name="Ling L.-S.L."/>
            <person name="Moir D.T."/>
            <person name="King B.L."/>
            <person name="Brown E.D."/>
            <person name="Doig P.C."/>
            <person name="Smith D.R."/>
            <person name="Noonan B."/>
            <person name="Guild B.C."/>
            <person name="deJonge B.L."/>
            <person name="Carmel G."/>
            <person name="Tummino P.J."/>
            <person name="Caruso A."/>
            <person name="Uria-Nickelsen M."/>
            <person name="Mills D.M."/>
            <person name="Ives C."/>
            <person name="Gibson R."/>
            <person name="Merberg D."/>
            <person name="Mills S.D."/>
            <person name="Jiang Q."/>
            <person name="Taylor D.E."/>
            <person name="Vovis G.F."/>
            <person name="Trust T.J."/>
        </authorList>
    </citation>
    <scope>NUCLEOTIDE SEQUENCE [LARGE SCALE GENOMIC DNA]</scope>
    <source>
        <strain>J99 / ATCC 700824</strain>
    </source>
</reference>
<gene>
    <name evidence="1" type="primary">amiE</name>
    <name type="ordered locus">jhp_0279</name>
</gene>
<feature type="chain" id="PRO_0000204059" description="Aliphatic amidase">
    <location>
        <begin position="1"/>
        <end position="339"/>
    </location>
</feature>
<feature type="domain" description="CN hydrolase" evidence="2">
    <location>
        <begin position="13"/>
        <end position="259"/>
    </location>
</feature>
<feature type="active site" description="Proton acceptor" evidence="1">
    <location>
        <position position="59"/>
    </location>
</feature>
<feature type="active site" description="Proton donor" evidence="1">
    <location>
        <position position="133"/>
    </location>
</feature>
<feature type="active site" description="Nucleophile" evidence="1">
    <location>
        <position position="165"/>
    </location>
</feature>
<comment type="function">
    <text evidence="1">Catalyzes the hydrolysis of short-chain aliphatic amides to their corresponding organic acids with release of ammonia.</text>
</comment>
<comment type="function">
    <text evidence="1">Also exhibits in vitro acyl transferase activity, transferring the acyl moiety of short-chain amides to hydroxylamine to form hydroxamates.</text>
</comment>
<comment type="catalytic activity">
    <reaction evidence="1">
        <text>a monocarboxylic acid amide + H2O = a monocarboxylate + NH4(+)</text>
        <dbReference type="Rhea" id="RHEA:12020"/>
        <dbReference type="ChEBI" id="CHEBI:15377"/>
        <dbReference type="ChEBI" id="CHEBI:28938"/>
        <dbReference type="ChEBI" id="CHEBI:35757"/>
        <dbReference type="ChEBI" id="CHEBI:83628"/>
        <dbReference type="EC" id="3.5.1.4"/>
    </reaction>
</comment>
<comment type="similarity">
    <text evidence="1">Belongs to the carbon-nitrogen hydrolase superfamily. Aliphatic amidase family.</text>
</comment>
<name>AMIE_HELPJ</name>
<organism>
    <name type="scientific">Helicobacter pylori (strain J99 / ATCC 700824)</name>
    <name type="common">Campylobacter pylori J99</name>
    <dbReference type="NCBI Taxonomy" id="85963"/>
    <lineage>
        <taxon>Bacteria</taxon>
        <taxon>Pseudomonadati</taxon>
        <taxon>Campylobacterota</taxon>
        <taxon>Epsilonproteobacteria</taxon>
        <taxon>Campylobacterales</taxon>
        <taxon>Helicobacteraceae</taxon>
        <taxon>Helicobacter</taxon>
    </lineage>
</organism>
<proteinExistence type="inferred from homology"/>
<protein>
    <recommendedName>
        <fullName evidence="1">Aliphatic amidase</fullName>
        <ecNumber evidence="1">3.5.1.4</ecNumber>
    </recommendedName>
    <alternativeName>
        <fullName evidence="1">Acylamide amidohydrolase</fullName>
    </alternativeName>
</protein>
<accession>Q9ZME1</accession>
<keyword id="KW-0378">Hydrolase</keyword>